<accession>P0A079</accession>
<accession>Q9KWL1</accession>
<feature type="chain" id="PRO_0000148959" description="Methionine aminopeptidase">
    <location>
        <begin position="1"/>
        <end position="252"/>
    </location>
</feature>
<feature type="binding site" evidence="1">
    <location>
        <position position="76"/>
    </location>
    <ligand>
        <name>substrate</name>
    </ligand>
</feature>
<feature type="binding site" evidence="1">
    <location>
        <position position="93"/>
    </location>
    <ligand>
        <name>a divalent metal cation</name>
        <dbReference type="ChEBI" id="CHEBI:60240"/>
        <label>1</label>
    </ligand>
</feature>
<feature type="binding site" evidence="1">
    <location>
        <position position="104"/>
    </location>
    <ligand>
        <name>a divalent metal cation</name>
        <dbReference type="ChEBI" id="CHEBI:60240"/>
        <label>1</label>
    </ligand>
</feature>
<feature type="binding site" evidence="1">
    <location>
        <position position="104"/>
    </location>
    <ligand>
        <name>a divalent metal cation</name>
        <dbReference type="ChEBI" id="CHEBI:60240"/>
        <label>2</label>
        <note>catalytic</note>
    </ligand>
</feature>
<feature type="binding site" evidence="1">
    <location>
        <position position="168"/>
    </location>
    <ligand>
        <name>a divalent metal cation</name>
        <dbReference type="ChEBI" id="CHEBI:60240"/>
        <label>2</label>
        <note>catalytic</note>
    </ligand>
</feature>
<feature type="binding site" evidence="1">
    <location>
        <position position="175"/>
    </location>
    <ligand>
        <name>substrate</name>
    </ligand>
</feature>
<feature type="binding site" evidence="1">
    <location>
        <position position="202"/>
    </location>
    <ligand>
        <name>a divalent metal cation</name>
        <dbReference type="ChEBI" id="CHEBI:60240"/>
        <label>2</label>
        <note>catalytic</note>
    </ligand>
</feature>
<feature type="binding site" evidence="1">
    <location>
        <position position="233"/>
    </location>
    <ligand>
        <name>a divalent metal cation</name>
        <dbReference type="ChEBI" id="CHEBI:60240"/>
        <label>1</label>
    </ligand>
</feature>
<feature type="binding site" evidence="1">
    <location>
        <position position="233"/>
    </location>
    <ligand>
        <name>a divalent metal cation</name>
        <dbReference type="ChEBI" id="CHEBI:60240"/>
        <label>2</label>
        <note>catalytic</note>
    </ligand>
</feature>
<organism>
    <name type="scientific">Staphylococcus aureus (strain MW2)</name>
    <dbReference type="NCBI Taxonomy" id="196620"/>
    <lineage>
        <taxon>Bacteria</taxon>
        <taxon>Bacillati</taxon>
        <taxon>Bacillota</taxon>
        <taxon>Bacilli</taxon>
        <taxon>Bacillales</taxon>
        <taxon>Staphylococcaceae</taxon>
        <taxon>Staphylococcus</taxon>
    </lineage>
</organism>
<evidence type="ECO:0000255" key="1">
    <source>
        <dbReference type="HAMAP-Rule" id="MF_01974"/>
    </source>
</evidence>
<sequence>MIVKTEEELQALKEIGYICAKVRNTMQAATKPGITTKELDNIAKELFEEYGAISAPIHDENFPGQTCISVNEEVAHGIPSKRVIREGDLVNIDVSALKNGYYADTGISFVVGESDDPMKQKVCDVATMAFENAIAKVKPGTKLSNIGKAVHNTARQNDLKVIKNLTGHGVGLSLHEAPAHVLNYFDPKDKTLLTEGMVLAIEPFISSNASFVTEGKNEWAFETSDKSFVAQIEHTVIVTKDGPILTTKIEEE</sequence>
<protein>
    <recommendedName>
        <fullName evidence="1">Methionine aminopeptidase</fullName>
        <shortName evidence="1">MAP</shortName>
        <shortName evidence="1">MetAP</shortName>
        <ecNumber evidence="1">3.4.11.18</ecNumber>
    </recommendedName>
    <alternativeName>
        <fullName evidence="1">Peptidase M</fullName>
    </alternativeName>
</protein>
<name>MAP1_STAAW</name>
<comment type="function">
    <text evidence="1">Removes the N-terminal methionine from nascent proteins. The N-terminal methionine is often cleaved when the second residue in the primary sequence is small and uncharged (Met-Ala-, Cys, Gly, Pro, Ser, Thr, or Val). Requires deformylation of the N(alpha)-formylated initiator methionine before it can be hydrolyzed.</text>
</comment>
<comment type="catalytic activity">
    <reaction evidence="1">
        <text>Release of N-terminal amino acids, preferentially methionine, from peptides and arylamides.</text>
        <dbReference type="EC" id="3.4.11.18"/>
    </reaction>
</comment>
<comment type="cofactor">
    <cofactor evidence="1">
        <name>Co(2+)</name>
        <dbReference type="ChEBI" id="CHEBI:48828"/>
    </cofactor>
    <cofactor evidence="1">
        <name>Zn(2+)</name>
        <dbReference type="ChEBI" id="CHEBI:29105"/>
    </cofactor>
    <cofactor evidence="1">
        <name>Mn(2+)</name>
        <dbReference type="ChEBI" id="CHEBI:29035"/>
    </cofactor>
    <cofactor evidence="1">
        <name>Fe(2+)</name>
        <dbReference type="ChEBI" id="CHEBI:29033"/>
    </cofactor>
    <text evidence="1">Binds 2 divalent metal cations per subunit. Has a high-affinity and a low affinity metal-binding site. The true nature of the physiological cofactor is under debate. The enzyme is active with cobalt, zinc, manganese or divalent iron ions. Most likely, methionine aminopeptidases function as mononuclear Fe(2+)-metalloproteases under physiological conditions, and the catalytically relevant metal-binding site has been assigned to the histidine-containing high-affinity site.</text>
</comment>
<comment type="subunit">
    <text evidence="1">Monomer.</text>
</comment>
<comment type="similarity">
    <text evidence="1">Belongs to the peptidase M24A family. Methionine aminopeptidase type 1 subfamily.</text>
</comment>
<keyword id="KW-0031">Aminopeptidase</keyword>
<keyword id="KW-0378">Hydrolase</keyword>
<keyword id="KW-0479">Metal-binding</keyword>
<keyword id="KW-0645">Protease</keyword>
<proteinExistence type="inferred from homology"/>
<gene>
    <name evidence="1" type="primary">map</name>
    <name type="ordered locus">MW1828</name>
</gene>
<dbReference type="EC" id="3.4.11.18" evidence="1"/>
<dbReference type="EMBL" id="BA000033">
    <property type="protein sequence ID" value="BAB95693.1"/>
    <property type="molecule type" value="Genomic_DNA"/>
</dbReference>
<dbReference type="RefSeq" id="WP_000636142.1">
    <property type="nucleotide sequence ID" value="NC_003923.1"/>
</dbReference>
<dbReference type="SMR" id="P0A079"/>
<dbReference type="BindingDB" id="P0A079"/>
<dbReference type="DrugBank" id="DB01882">
    <property type="generic name" value="(2s)-2-Amino-4-(Methylsulfanyl)-1-Pyridin-2-Ylbutane-1,1-Diol"/>
</dbReference>
<dbReference type="DrugBank" id="DB02408">
    <property type="generic name" value="(3s)-3-Amino-1-(Cyclopropylamino)Heptane-2,2-Diol"/>
</dbReference>
<dbReference type="MEROPS" id="M24.036"/>
<dbReference type="KEGG" id="sam:MW1828"/>
<dbReference type="HOGENOM" id="CLU_015857_0_2_9"/>
<dbReference type="GO" id="GO:0004239">
    <property type="term" value="F:initiator methionyl aminopeptidase activity"/>
    <property type="evidence" value="ECO:0007669"/>
    <property type="project" value="UniProtKB-UniRule"/>
</dbReference>
<dbReference type="GO" id="GO:0046872">
    <property type="term" value="F:metal ion binding"/>
    <property type="evidence" value="ECO:0007669"/>
    <property type="project" value="UniProtKB-UniRule"/>
</dbReference>
<dbReference type="GO" id="GO:0070006">
    <property type="term" value="F:metalloaminopeptidase activity"/>
    <property type="evidence" value="ECO:0007669"/>
    <property type="project" value="UniProtKB-UniRule"/>
</dbReference>
<dbReference type="GO" id="GO:0006508">
    <property type="term" value="P:proteolysis"/>
    <property type="evidence" value="ECO:0007669"/>
    <property type="project" value="UniProtKB-KW"/>
</dbReference>
<dbReference type="CDD" id="cd01086">
    <property type="entry name" value="MetAP1"/>
    <property type="match status" value="1"/>
</dbReference>
<dbReference type="Gene3D" id="3.90.230.10">
    <property type="entry name" value="Creatinase/methionine aminopeptidase superfamily"/>
    <property type="match status" value="1"/>
</dbReference>
<dbReference type="HAMAP" id="MF_01974">
    <property type="entry name" value="MetAP_1"/>
    <property type="match status" value="1"/>
</dbReference>
<dbReference type="InterPro" id="IPR036005">
    <property type="entry name" value="Creatinase/aminopeptidase-like"/>
</dbReference>
<dbReference type="InterPro" id="IPR000994">
    <property type="entry name" value="Pept_M24"/>
</dbReference>
<dbReference type="InterPro" id="IPR001714">
    <property type="entry name" value="Pept_M24_MAP"/>
</dbReference>
<dbReference type="InterPro" id="IPR002467">
    <property type="entry name" value="Pept_M24A_MAP1"/>
</dbReference>
<dbReference type="NCBIfam" id="TIGR00500">
    <property type="entry name" value="met_pdase_I"/>
    <property type="match status" value="1"/>
</dbReference>
<dbReference type="PANTHER" id="PTHR43330">
    <property type="entry name" value="METHIONINE AMINOPEPTIDASE"/>
    <property type="match status" value="1"/>
</dbReference>
<dbReference type="PANTHER" id="PTHR43330:SF13">
    <property type="entry name" value="METHIONINE AMINOPEPTIDASE 2"/>
    <property type="match status" value="1"/>
</dbReference>
<dbReference type="Pfam" id="PF00557">
    <property type="entry name" value="Peptidase_M24"/>
    <property type="match status" value="1"/>
</dbReference>
<dbReference type="PRINTS" id="PR00599">
    <property type="entry name" value="MAPEPTIDASE"/>
</dbReference>
<dbReference type="SUPFAM" id="SSF55920">
    <property type="entry name" value="Creatinase/aminopeptidase"/>
    <property type="match status" value="1"/>
</dbReference>
<reference key="1">
    <citation type="journal article" date="2002" name="Lancet">
        <title>Genome and virulence determinants of high virulence community-acquired MRSA.</title>
        <authorList>
            <person name="Baba T."/>
            <person name="Takeuchi F."/>
            <person name="Kuroda M."/>
            <person name="Yuzawa H."/>
            <person name="Aoki K."/>
            <person name="Oguchi A."/>
            <person name="Nagai Y."/>
            <person name="Iwama N."/>
            <person name="Asano K."/>
            <person name="Naimi T."/>
            <person name="Kuroda H."/>
            <person name="Cui L."/>
            <person name="Yamamoto K."/>
            <person name="Hiramatsu K."/>
        </authorList>
    </citation>
    <scope>NUCLEOTIDE SEQUENCE [LARGE SCALE GENOMIC DNA]</scope>
    <source>
        <strain>MW2</strain>
    </source>
</reference>